<reference key="1">
    <citation type="journal article" date="2005" name="PLoS Biol.">
        <title>The genomes of Oryza sativa: a history of duplications.</title>
        <authorList>
            <person name="Yu J."/>
            <person name="Wang J."/>
            <person name="Lin W."/>
            <person name="Li S."/>
            <person name="Li H."/>
            <person name="Zhou J."/>
            <person name="Ni P."/>
            <person name="Dong W."/>
            <person name="Hu S."/>
            <person name="Zeng C."/>
            <person name="Zhang J."/>
            <person name="Zhang Y."/>
            <person name="Li R."/>
            <person name="Xu Z."/>
            <person name="Li S."/>
            <person name="Li X."/>
            <person name="Zheng H."/>
            <person name="Cong L."/>
            <person name="Lin L."/>
            <person name="Yin J."/>
            <person name="Geng J."/>
            <person name="Li G."/>
            <person name="Shi J."/>
            <person name="Liu J."/>
            <person name="Lv H."/>
            <person name="Li J."/>
            <person name="Wang J."/>
            <person name="Deng Y."/>
            <person name="Ran L."/>
            <person name="Shi X."/>
            <person name="Wang X."/>
            <person name="Wu Q."/>
            <person name="Li C."/>
            <person name="Ren X."/>
            <person name="Wang J."/>
            <person name="Wang X."/>
            <person name="Li D."/>
            <person name="Liu D."/>
            <person name="Zhang X."/>
            <person name="Ji Z."/>
            <person name="Zhao W."/>
            <person name="Sun Y."/>
            <person name="Zhang Z."/>
            <person name="Bao J."/>
            <person name="Han Y."/>
            <person name="Dong L."/>
            <person name="Ji J."/>
            <person name="Chen P."/>
            <person name="Wu S."/>
            <person name="Liu J."/>
            <person name="Xiao Y."/>
            <person name="Bu D."/>
            <person name="Tan J."/>
            <person name="Yang L."/>
            <person name="Ye C."/>
            <person name="Zhang J."/>
            <person name="Xu J."/>
            <person name="Zhou Y."/>
            <person name="Yu Y."/>
            <person name="Zhang B."/>
            <person name="Zhuang S."/>
            <person name="Wei H."/>
            <person name="Liu B."/>
            <person name="Lei M."/>
            <person name="Yu H."/>
            <person name="Li Y."/>
            <person name="Xu H."/>
            <person name="Wei S."/>
            <person name="He X."/>
            <person name="Fang L."/>
            <person name="Zhang Z."/>
            <person name="Zhang Y."/>
            <person name="Huang X."/>
            <person name="Su Z."/>
            <person name="Tong W."/>
            <person name="Li J."/>
            <person name="Tong Z."/>
            <person name="Li S."/>
            <person name="Ye J."/>
            <person name="Wang L."/>
            <person name="Fang L."/>
            <person name="Lei T."/>
            <person name="Chen C.-S."/>
            <person name="Chen H.-C."/>
            <person name="Xu Z."/>
            <person name="Li H."/>
            <person name="Huang H."/>
            <person name="Zhang F."/>
            <person name="Xu H."/>
            <person name="Li N."/>
            <person name="Zhao C."/>
            <person name="Li S."/>
            <person name="Dong L."/>
            <person name="Huang Y."/>
            <person name="Li L."/>
            <person name="Xi Y."/>
            <person name="Qi Q."/>
            <person name="Li W."/>
            <person name="Zhang B."/>
            <person name="Hu W."/>
            <person name="Zhang Y."/>
            <person name="Tian X."/>
            <person name="Jiao Y."/>
            <person name="Liang X."/>
            <person name="Jin J."/>
            <person name="Gao L."/>
            <person name="Zheng W."/>
            <person name="Hao B."/>
            <person name="Liu S.-M."/>
            <person name="Wang W."/>
            <person name="Yuan L."/>
            <person name="Cao M."/>
            <person name="McDermott J."/>
            <person name="Samudrala R."/>
            <person name="Wang J."/>
            <person name="Wong G.K.-S."/>
            <person name="Yang H."/>
        </authorList>
    </citation>
    <scope>NUCLEOTIDE SEQUENCE [LARGE SCALE GENOMIC DNA]</scope>
    <source>
        <strain>cv. 93-11</strain>
    </source>
</reference>
<name>ZHD11_ORYSI</name>
<sequence length="238" mass="24295">MEQQQERPREVYRECMRNHAAKLGTYANDGCCEYTPDDGHPAGLLCAACGCHRNFHRKDFLDGRATAAAGGAGGAGVGVAPMLPAPGGGGPPGYMHMAAMGGAVGGGGGVDGGGGSGGRRRTRTKFTEEQKARMLRFAERLGWRMPKREPGRAPGDDEVARFCREIGVNRQVFKVWMHNHKAGGGGGGGGSGGPGAGGGAQTSSSTTRGGGDVGVGLSPAMGGDGEDDEEVRGSEMCM</sequence>
<protein>
    <recommendedName>
        <fullName>Zinc-finger homeodomain protein 11</fullName>
    </recommendedName>
</protein>
<evidence type="ECO:0000250" key="1"/>
<evidence type="ECO:0000255" key="2">
    <source>
        <dbReference type="PROSITE-ProRule" id="PRU00856"/>
    </source>
</evidence>
<evidence type="ECO:0000256" key="3">
    <source>
        <dbReference type="SAM" id="MobiDB-lite"/>
    </source>
</evidence>
<gene>
    <name type="primary">ZHD11</name>
    <name type="ORF">OsI_13303</name>
</gene>
<keyword id="KW-0238">DNA-binding</keyword>
<keyword id="KW-0371">Homeobox</keyword>
<keyword id="KW-0479">Metal-binding</keyword>
<keyword id="KW-0539">Nucleus</keyword>
<keyword id="KW-1185">Reference proteome</keyword>
<keyword id="KW-0804">Transcription</keyword>
<keyword id="KW-0805">Transcription regulation</keyword>
<keyword id="KW-0862">Zinc</keyword>
<keyword id="KW-0863">Zinc-finger</keyword>
<organism>
    <name type="scientific">Oryza sativa subsp. indica</name>
    <name type="common">Rice</name>
    <dbReference type="NCBI Taxonomy" id="39946"/>
    <lineage>
        <taxon>Eukaryota</taxon>
        <taxon>Viridiplantae</taxon>
        <taxon>Streptophyta</taxon>
        <taxon>Embryophyta</taxon>
        <taxon>Tracheophyta</taxon>
        <taxon>Spermatophyta</taxon>
        <taxon>Magnoliopsida</taxon>
        <taxon>Liliopsida</taxon>
        <taxon>Poales</taxon>
        <taxon>Poaceae</taxon>
        <taxon>BOP clade</taxon>
        <taxon>Oryzoideae</taxon>
        <taxon>Oryzeae</taxon>
        <taxon>Oryzinae</taxon>
        <taxon>Oryza</taxon>
        <taxon>Oryza sativa</taxon>
    </lineage>
</organism>
<accession>A2XLF4</accession>
<proteinExistence type="inferred from homology"/>
<comment type="function">
    <text evidence="1">Putative transcription factor.</text>
</comment>
<comment type="subunit">
    <text evidence="1">Homo- and heterodimer with other ZFHD proteins.</text>
</comment>
<comment type="subcellular location">
    <subcellularLocation>
        <location evidence="1">Nucleus</location>
    </subcellularLocation>
</comment>
<comment type="domain">
    <text>The homeodomain differs form the typical one by having namely 4 instead of 3 extra amino acids inserted in the loop between helix 1 and helix 2.</text>
</comment>
<dbReference type="EMBL" id="CM000128">
    <property type="protein sequence ID" value="EAY91664.1"/>
    <property type="molecule type" value="Genomic_DNA"/>
</dbReference>
<dbReference type="SMR" id="A2XLF4"/>
<dbReference type="STRING" id="39946.A2XLF4"/>
<dbReference type="EnsemblPlants" id="BGIOSGA013464-TA">
    <property type="protein sequence ID" value="BGIOSGA013464-PA"/>
    <property type="gene ID" value="BGIOSGA013464"/>
</dbReference>
<dbReference type="EnsemblPlants" id="OsGoSa_03g0032290.01">
    <property type="protein sequence ID" value="OsGoSa_03g0032290.01"/>
    <property type="gene ID" value="OsGoSa_03g0032290"/>
</dbReference>
<dbReference type="EnsemblPlants" id="OsIR64_03g0031850.01">
    <property type="protein sequence ID" value="OsIR64_03g0031850.01"/>
    <property type="gene ID" value="OsIR64_03g0031850"/>
</dbReference>
<dbReference type="EnsemblPlants" id="OsKYG_03g0032300.01">
    <property type="protein sequence ID" value="OsKYG_03g0032300.01"/>
    <property type="gene ID" value="OsKYG_03g0032300"/>
</dbReference>
<dbReference type="EnsemblPlants" id="OsLaMu_03g0032080.01">
    <property type="protein sequence ID" value="OsLaMu_03g0032080.01"/>
    <property type="gene ID" value="OsLaMu_03g0032080"/>
</dbReference>
<dbReference type="EnsemblPlants" id="OsLima_03g0032270.01">
    <property type="protein sequence ID" value="OsLima_03g0032270.01"/>
    <property type="gene ID" value="OsLima_03g0032270"/>
</dbReference>
<dbReference type="EnsemblPlants" id="OsLiXu_03g0032060.01">
    <property type="protein sequence ID" value="OsLiXu_03g0032060.01"/>
    <property type="gene ID" value="OsLiXu_03g0032060"/>
</dbReference>
<dbReference type="EnsemblPlants" id="OsMH63_03G032300_01">
    <property type="protein sequence ID" value="OsMH63_03G032300_01"/>
    <property type="gene ID" value="OsMH63_03G032300"/>
</dbReference>
<dbReference type="EnsemblPlants" id="OsZS97_03G032210_01">
    <property type="protein sequence ID" value="OsZS97_03G032210_01"/>
    <property type="gene ID" value="OsZS97_03G032210"/>
</dbReference>
<dbReference type="Gramene" id="BGIOSGA013464-TA">
    <property type="protein sequence ID" value="BGIOSGA013464-PA"/>
    <property type="gene ID" value="BGIOSGA013464"/>
</dbReference>
<dbReference type="Gramene" id="OsGoSa_03g0032290.01">
    <property type="protein sequence ID" value="OsGoSa_03g0032290.01"/>
    <property type="gene ID" value="OsGoSa_03g0032290"/>
</dbReference>
<dbReference type="Gramene" id="OsIR64_03g0031850.01">
    <property type="protein sequence ID" value="OsIR64_03g0031850.01"/>
    <property type="gene ID" value="OsIR64_03g0031850"/>
</dbReference>
<dbReference type="Gramene" id="OsKYG_03g0032300.01">
    <property type="protein sequence ID" value="OsKYG_03g0032300.01"/>
    <property type="gene ID" value="OsKYG_03g0032300"/>
</dbReference>
<dbReference type="Gramene" id="OsLaMu_03g0032080.01">
    <property type="protein sequence ID" value="OsLaMu_03g0032080.01"/>
    <property type="gene ID" value="OsLaMu_03g0032080"/>
</dbReference>
<dbReference type="Gramene" id="OsLima_03g0032270.01">
    <property type="protein sequence ID" value="OsLima_03g0032270.01"/>
    <property type="gene ID" value="OsLima_03g0032270"/>
</dbReference>
<dbReference type="Gramene" id="OsLiXu_03g0032060.01">
    <property type="protein sequence ID" value="OsLiXu_03g0032060.01"/>
    <property type="gene ID" value="OsLiXu_03g0032060"/>
</dbReference>
<dbReference type="Gramene" id="OsMH63_03G032300_01">
    <property type="protein sequence ID" value="OsMH63_03G032300_01"/>
    <property type="gene ID" value="OsMH63_03G032300"/>
</dbReference>
<dbReference type="Gramene" id="OsZS97_03G032210_01">
    <property type="protein sequence ID" value="OsZS97_03G032210_01"/>
    <property type="gene ID" value="OsZS97_03G032210"/>
</dbReference>
<dbReference type="HOGENOM" id="CLU_039237_2_2_1"/>
<dbReference type="OMA" id="MHHMAIT"/>
<dbReference type="OrthoDB" id="1884189at2759"/>
<dbReference type="Proteomes" id="UP000007015">
    <property type="component" value="Chromosome 3"/>
</dbReference>
<dbReference type="GO" id="GO:0005634">
    <property type="term" value="C:nucleus"/>
    <property type="evidence" value="ECO:0007669"/>
    <property type="project" value="UniProtKB-SubCell"/>
</dbReference>
<dbReference type="GO" id="GO:0003700">
    <property type="term" value="F:DNA-binding transcription factor activity"/>
    <property type="evidence" value="ECO:0007669"/>
    <property type="project" value="TreeGrafter"/>
</dbReference>
<dbReference type="GO" id="GO:0000976">
    <property type="term" value="F:transcription cis-regulatory region binding"/>
    <property type="evidence" value="ECO:0007669"/>
    <property type="project" value="TreeGrafter"/>
</dbReference>
<dbReference type="GO" id="GO:0008270">
    <property type="term" value="F:zinc ion binding"/>
    <property type="evidence" value="ECO:0007669"/>
    <property type="project" value="UniProtKB-KW"/>
</dbReference>
<dbReference type="GO" id="GO:0050793">
    <property type="term" value="P:regulation of developmental process"/>
    <property type="evidence" value="ECO:0007669"/>
    <property type="project" value="TreeGrafter"/>
</dbReference>
<dbReference type="Gene3D" id="1.10.10.60">
    <property type="entry name" value="Homeodomain-like"/>
    <property type="match status" value="1"/>
</dbReference>
<dbReference type="InterPro" id="IPR009057">
    <property type="entry name" value="Homeodomain-like_sf"/>
</dbReference>
<dbReference type="InterPro" id="IPR006455">
    <property type="entry name" value="Homeodomain_ZF_HD"/>
</dbReference>
<dbReference type="InterPro" id="IPR006456">
    <property type="entry name" value="ZF_HD_homeobox_Cys/His_dimer"/>
</dbReference>
<dbReference type="NCBIfam" id="TIGR01565">
    <property type="entry name" value="homeo_ZF_HD"/>
    <property type="match status" value="1"/>
</dbReference>
<dbReference type="NCBIfam" id="TIGR01566">
    <property type="entry name" value="ZF_HD_prot_N"/>
    <property type="match status" value="1"/>
</dbReference>
<dbReference type="PANTHER" id="PTHR31948:SF16">
    <property type="entry name" value="ZINC-FINGER HOMEODOMAIN PROTEIN 11"/>
    <property type="match status" value="1"/>
</dbReference>
<dbReference type="PANTHER" id="PTHR31948">
    <property type="entry name" value="ZINC-FINGER HOMEODOMAIN PROTEIN 2"/>
    <property type="match status" value="1"/>
</dbReference>
<dbReference type="Pfam" id="PF04770">
    <property type="entry name" value="ZF-HD_dimer"/>
    <property type="match status" value="1"/>
</dbReference>
<dbReference type="SUPFAM" id="SSF46689">
    <property type="entry name" value="Homeodomain-like"/>
    <property type="match status" value="1"/>
</dbReference>
<dbReference type="PROSITE" id="PS51523">
    <property type="entry name" value="ZF_HD_DIMER"/>
    <property type="match status" value="1"/>
</dbReference>
<feature type="chain" id="PRO_0000426050" description="Zinc-finger homeodomain protein 11">
    <location>
        <begin position="1"/>
        <end position="238"/>
    </location>
</feature>
<feature type="zinc finger region" description="ZF-HD dimerization-type; degenerate" evidence="2">
    <location>
        <begin position="12"/>
        <end position="59"/>
    </location>
</feature>
<feature type="DNA-binding region" description="Homeobox">
    <location>
        <begin position="119"/>
        <end position="188"/>
    </location>
</feature>
<feature type="region of interest" description="Disordered" evidence="3">
    <location>
        <begin position="183"/>
        <end position="238"/>
    </location>
</feature>
<feature type="compositionally biased region" description="Gly residues" evidence="3">
    <location>
        <begin position="183"/>
        <end position="200"/>
    </location>
</feature>
<feature type="site" description="Required for DNA-binding" evidence="1">
    <location>
        <position position="177"/>
    </location>
</feature>